<gene>
    <name evidence="1" type="primary">aroK</name>
    <name type="ordered locus">Aave_1002</name>
</gene>
<evidence type="ECO:0000255" key="1">
    <source>
        <dbReference type="HAMAP-Rule" id="MF_00109"/>
    </source>
</evidence>
<sequence length="183" mass="20417">MRGPQLSIHLIGLPGSGKSTVGRHLARRLGLPFIDSDHVIEQRIGGSIRGFFDREGEAAFRDLEEEVILELTEANVPPQVLATGGGVVIRPGNRTRLRERGTVVYLNASPEEIFRHIRHDQTRPLLQVGSPLDRLRELQRERDPLYREAAHFVISPERGKNVAALVQHIAMQLELAGIRPPSP</sequence>
<reference key="1">
    <citation type="submission" date="2006-12" db="EMBL/GenBank/DDBJ databases">
        <title>Complete sequence of Acidovorax avenae subsp. citrulli AAC00-1.</title>
        <authorList>
            <person name="Copeland A."/>
            <person name="Lucas S."/>
            <person name="Lapidus A."/>
            <person name="Barry K."/>
            <person name="Detter J.C."/>
            <person name="Glavina del Rio T."/>
            <person name="Dalin E."/>
            <person name="Tice H."/>
            <person name="Pitluck S."/>
            <person name="Kiss H."/>
            <person name="Brettin T."/>
            <person name="Bruce D."/>
            <person name="Han C."/>
            <person name="Tapia R."/>
            <person name="Gilna P."/>
            <person name="Schmutz J."/>
            <person name="Larimer F."/>
            <person name="Land M."/>
            <person name="Hauser L."/>
            <person name="Kyrpides N."/>
            <person name="Kim E."/>
            <person name="Stahl D."/>
            <person name="Richardson P."/>
        </authorList>
    </citation>
    <scope>NUCLEOTIDE SEQUENCE [LARGE SCALE GENOMIC DNA]</scope>
    <source>
        <strain>AAC00-1</strain>
    </source>
</reference>
<organism>
    <name type="scientific">Paracidovorax citrulli (strain AAC00-1)</name>
    <name type="common">Acidovorax citrulli</name>
    <dbReference type="NCBI Taxonomy" id="397945"/>
    <lineage>
        <taxon>Bacteria</taxon>
        <taxon>Pseudomonadati</taxon>
        <taxon>Pseudomonadota</taxon>
        <taxon>Betaproteobacteria</taxon>
        <taxon>Burkholderiales</taxon>
        <taxon>Comamonadaceae</taxon>
        <taxon>Paracidovorax</taxon>
    </lineage>
</organism>
<feature type="chain" id="PRO_1000022960" description="Shikimate kinase">
    <location>
        <begin position="1"/>
        <end position="183"/>
    </location>
</feature>
<feature type="binding site" evidence="1">
    <location>
        <begin position="15"/>
        <end position="20"/>
    </location>
    <ligand>
        <name>ATP</name>
        <dbReference type="ChEBI" id="CHEBI:30616"/>
    </ligand>
</feature>
<feature type="binding site" evidence="1">
    <location>
        <position position="19"/>
    </location>
    <ligand>
        <name>Mg(2+)</name>
        <dbReference type="ChEBI" id="CHEBI:18420"/>
    </ligand>
</feature>
<feature type="binding site" evidence="1">
    <location>
        <position position="37"/>
    </location>
    <ligand>
        <name>substrate</name>
    </ligand>
</feature>
<feature type="binding site" evidence="1">
    <location>
        <position position="61"/>
    </location>
    <ligand>
        <name>substrate</name>
    </ligand>
</feature>
<feature type="binding site" evidence="1">
    <location>
        <position position="85"/>
    </location>
    <ligand>
        <name>substrate</name>
    </ligand>
</feature>
<feature type="binding site" evidence="1">
    <location>
        <position position="123"/>
    </location>
    <ligand>
        <name>ATP</name>
        <dbReference type="ChEBI" id="CHEBI:30616"/>
    </ligand>
</feature>
<feature type="binding site" evidence="1">
    <location>
        <position position="142"/>
    </location>
    <ligand>
        <name>substrate</name>
    </ligand>
</feature>
<proteinExistence type="inferred from homology"/>
<dbReference type="EC" id="2.7.1.71" evidence="1"/>
<dbReference type="EMBL" id="CP000512">
    <property type="protein sequence ID" value="ABM31600.1"/>
    <property type="molecule type" value="Genomic_DNA"/>
</dbReference>
<dbReference type="RefSeq" id="WP_011794158.1">
    <property type="nucleotide sequence ID" value="NC_008752.1"/>
</dbReference>
<dbReference type="SMR" id="A1TKW2"/>
<dbReference type="STRING" id="397945.Aave_1002"/>
<dbReference type="GeneID" id="79790657"/>
<dbReference type="KEGG" id="aav:Aave_1002"/>
<dbReference type="eggNOG" id="COG0703">
    <property type="taxonomic scope" value="Bacteria"/>
</dbReference>
<dbReference type="HOGENOM" id="CLU_057607_2_2_4"/>
<dbReference type="OrthoDB" id="9800332at2"/>
<dbReference type="UniPathway" id="UPA00053">
    <property type="reaction ID" value="UER00088"/>
</dbReference>
<dbReference type="Proteomes" id="UP000002596">
    <property type="component" value="Chromosome"/>
</dbReference>
<dbReference type="GO" id="GO:0005829">
    <property type="term" value="C:cytosol"/>
    <property type="evidence" value="ECO:0007669"/>
    <property type="project" value="TreeGrafter"/>
</dbReference>
<dbReference type="GO" id="GO:0005524">
    <property type="term" value="F:ATP binding"/>
    <property type="evidence" value="ECO:0007669"/>
    <property type="project" value="UniProtKB-UniRule"/>
</dbReference>
<dbReference type="GO" id="GO:0000287">
    <property type="term" value="F:magnesium ion binding"/>
    <property type="evidence" value="ECO:0007669"/>
    <property type="project" value="UniProtKB-UniRule"/>
</dbReference>
<dbReference type="GO" id="GO:0004765">
    <property type="term" value="F:shikimate kinase activity"/>
    <property type="evidence" value="ECO:0007669"/>
    <property type="project" value="UniProtKB-UniRule"/>
</dbReference>
<dbReference type="GO" id="GO:0008652">
    <property type="term" value="P:amino acid biosynthetic process"/>
    <property type="evidence" value="ECO:0007669"/>
    <property type="project" value="UniProtKB-KW"/>
</dbReference>
<dbReference type="GO" id="GO:0009073">
    <property type="term" value="P:aromatic amino acid family biosynthetic process"/>
    <property type="evidence" value="ECO:0007669"/>
    <property type="project" value="UniProtKB-KW"/>
</dbReference>
<dbReference type="GO" id="GO:0009423">
    <property type="term" value="P:chorismate biosynthetic process"/>
    <property type="evidence" value="ECO:0007669"/>
    <property type="project" value="UniProtKB-UniRule"/>
</dbReference>
<dbReference type="CDD" id="cd00464">
    <property type="entry name" value="SK"/>
    <property type="match status" value="1"/>
</dbReference>
<dbReference type="Gene3D" id="3.40.50.300">
    <property type="entry name" value="P-loop containing nucleotide triphosphate hydrolases"/>
    <property type="match status" value="1"/>
</dbReference>
<dbReference type="HAMAP" id="MF_00109">
    <property type="entry name" value="Shikimate_kinase"/>
    <property type="match status" value="1"/>
</dbReference>
<dbReference type="InterPro" id="IPR027417">
    <property type="entry name" value="P-loop_NTPase"/>
</dbReference>
<dbReference type="InterPro" id="IPR031322">
    <property type="entry name" value="Shikimate/glucono_kinase"/>
</dbReference>
<dbReference type="InterPro" id="IPR000623">
    <property type="entry name" value="Shikimate_kinase/TSH1"/>
</dbReference>
<dbReference type="InterPro" id="IPR023000">
    <property type="entry name" value="Shikimate_kinase_CS"/>
</dbReference>
<dbReference type="PANTHER" id="PTHR21087">
    <property type="entry name" value="SHIKIMATE KINASE"/>
    <property type="match status" value="1"/>
</dbReference>
<dbReference type="PANTHER" id="PTHR21087:SF16">
    <property type="entry name" value="SHIKIMATE KINASE 1, CHLOROPLASTIC"/>
    <property type="match status" value="1"/>
</dbReference>
<dbReference type="Pfam" id="PF01202">
    <property type="entry name" value="SKI"/>
    <property type="match status" value="1"/>
</dbReference>
<dbReference type="PRINTS" id="PR01100">
    <property type="entry name" value="SHIKIMTKNASE"/>
</dbReference>
<dbReference type="SUPFAM" id="SSF52540">
    <property type="entry name" value="P-loop containing nucleoside triphosphate hydrolases"/>
    <property type="match status" value="1"/>
</dbReference>
<dbReference type="PROSITE" id="PS01128">
    <property type="entry name" value="SHIKIMATE_KINASE"/>
    <property type="match status" value="1"/>
</dbReference>
<name>AROK_PARC0</name>
<protein>
    <recommendedName>
        <fullName evidence="1">Shikimate kinase</fullName>
        <shortName evidence="1">SK</shortName>
        <ecNumber evidence="1">2.7.1.71</ecNumber>
    </recommendedName>
</protein>
<keyword id="KW-0028">Amino-acid biosynthesis</keyword>
<keyword id="KW-0057">Aromatic amino acid biosynthesis</keyword>
<keyword id="KW-0067">ATP-binding</keyword>
<keyword id="KW-0963">Cytoplasm</keyword>
<keyword id="KW-0418">Kinase</keyword>
<keyword id="KW-0460">Magnesium</keyword>
<keyword id="KW-0479">Metal-binding</keyword>
<keyword id="KW-0547">Nucleotide-binding</keyword>
<keyword id="KW-0808">Transferase</keyword>
<comment type="function">
    <text evidence="1">Catalyzes the specific phosphorylation of the 3-hydroxyl group of shikimic acid using ATP as a cosubstrate.</text>
</comment>
<comment type="catalytic activity">
    <reaction evidence="1">
        <text>shikimate + ATP = 3-phosphoshikimate + ADP + H(+)</text>
        <dbReference type="Rhea" id="RHEA:13121"/>
        <dbReference type="ChEBI" id="CHEBI:15378"/>
        <dbReference type="ChEBI" id="CHEBI:30616"/>
        <dbReference type="ChEBI" id="CHEBI:36208"/>
        <dbReference type="ChEBI" id="CHEBI:145989"/>
        <dbReference type="ChEBI" id="CHEBI:456216"/>
        <dbReference type="EC" id="2.7.1.71"/>
    </reaction>
</comment>
<comment type="cofactor">
    <cofactor evidence="1">
        <name>Mg(2+)</name>
        <dbReference type="ChEBI" id="CHEBI:18420"/>
    </cofactor>
    <text evidence="1">Binds 1 Mg(2+) ion per subunit.</text>
</comment>
<comment type="pathway">
    <text evidence="1">Metabolic intermediate biosynthesis; chorismate biosynthesis; chorismate from D-erythrose 4-phosphate and phosphoenolpyruvate: step 5/7.</text>
</comment>
<comment type="subunit">
    <text evidence="1">Monomer.</text>
</comment>
<comment type="subcellular location">
    <subcellularLocation>
        <location evidence="1">Cytoplasm</location>
    </subcellularLocation>
</comment>
<comment type="similarity">
    <text evidence="1">Belongs to the shikimate kinase family.</text>
</comment>
<accession>A1TKW2</accession>